<proteinExistence type="inferred from homology"/>
<gene>
    <name evidence="1" type="primary">pheS</name>
    <name type="ordered locus">SAR1111</name>
</gene>
<keyword id="KW-0030">Aminoacyl-tRNA synthetase</keyword>
<keyword id="KW-0067">ATP-binding</keyword>
<keyword id="KW-0963">Cytoplasm</keyword>
<keyword id="KW-0436">Ligase</keyword>
<keyword id="KW-0460">Magnesium</keyword>
<keyword id="KW-0479">Metal-binding</keyword>
<keyword id="KW-0547">Nucleotide-binding</keyword>
<keyword id="KW-0648">Protein biosynthesis</keyword>
<organism>
    <name type="scientific">Staphylococcus aureus (strain MRSA252)</name>
    <dbReference type="NCBI Taxonomy" id="282458"/>
    <lineage>
        <taxon>Bacteria</taxon>
        <taxon>Bacillati</taxon>
        <taxon>Bacillota</taxon>
        <taxon>Bacilli</taxon>
        <taxon>Bacillales</taxon>
        <taxon>Staphylococcaceae</taxon>
        <taxon>Staphylococcus</taxon>
    </lineage>
</organism>
<dbReference type="EC" id="6.1.1.20" evidence="1"/>
<dbReference type="EMBL" id="BX571856">
    <property type="protein sequence ID" value="CAG40114.1"/>
    <property type="molecule type" value="Genomic_DNA"/>
</dbReference>
<dbReference type="RefSeq" id="WP_000003566.1">
    <property type="nucleotide sequence ID" value="NC_002952.2"/>
</dbReference>
<dbReference type="SMR" id="Q6GHU7"/>
<dbReference type="KEGG" id="sar:SAR1111"/>
<dbReference type="HOGENOM" id="CLU_025086_0_1_9"/>
<dbReference type="Proteomes" id="UP000000596">
    <property type="component" value="Chromosome"/>
</dbReference>
<dbReference type="GO" id="GO:0005737">
    <property type="term" value="C:cytoplasm"/>
    <property type="evidence" value="ECO:0007669"/>
    <property type="project" value="UniProtKB-SubCell"/>
</dbReference>
<dbReference type="GO" id="GO:0005524">
    <property type="term" value="F:ATP binding"/>
    <property type="evidence" value="ECO:0007669"/>
    <property type="project" value="UniProtKB-UniRule"/>
</dbReference>
<dbReference type="GO" id="GO:0140096">
    <property type="term" value="F:catalytic activity, acting on a protein"/>
    <property type="evidence" value="ECO:0007669"/>
    <property type="project" value="UniProtKB-ARBA"/>
</dbReference>
<dbReference type="GO" id="GO:0000287">
    <property type="term" value="F:magnesium ion binding"/>
    <property type="evidence" value="ECO:0007669"/>
    <property type="project" value="UniProtKB-UniRule"/>
</dbReference>
<dbReference type="GO" id="GO:0004826">
    <property type="term" value="F:phenylalanine-tRNA ligase activity"/>
    <property type="evidence" value="ECO:0007669"/>
    <property type="project" value="UniProtKB-UniRule"/>
</dbReference>
<dbReference type="GO" id="GO:0016740">
    <property type="term" value="F:transferase activity"/>
    <property type="evidence" value="ECO:0007669"/>
    <property type="project" value="UniProtKB-ARBA"/>
</dbReference>
<dbReference type="GO" id="GO:0000049">
    <property type="term" value="F:tRNA binding"/>
    <property type="evidence" value="ECO:0007669"/>
    <property type="project" value="InterPro"/>
</dbReference>
<dbReference type="GO" id="GO:0006432">
    <property type="term" value="P:phenylalanyl-tRNA aminoacylation"/>
    <property type="evidence" value="ECO:0007669"/>
    <property type="project" value="UniProtKB-UniRule"/>
</dbReference>
<dbReference type="CDD" id="cd00496">
    <property type="entry name" value="PheRS_alpha_core"/>
    <property type="match status" value="1"/>
</dbReference>
<dbReference type="FunFam" id="3.30.930.10:FF:000003">
    <property type="entry name" value="Phenylalanine--tRNA ligase alpha subunit"/>
    <property type="match status" value="1"/>
</dbReference>
<dbReference type="Gene3D" id="3.30.930.10">
    <property type="entry name" value="Bira Bifunctional Protein, Domain 2"/>
    <property type="match status" value="1"/>
</dbReference>
<dbReference type="HAMAP" id="MF_00281">
    <property type="entry name" value="Phe_tRNA_synth_alpha1"/>
    <property type="match status" value="1"/>
</dbReference>
<dbReference type="InterPro" id="IPR006195">
    <property type="entry name" value="aa-tRNA-synth_II"/>
</dbReference>
<dbReference type="InterPro" id="IPR045864">
    <property type="entry name" value="aa-tRNA-synth_II/BPL/LPL"/>
</dbReference>
<dbReference type="InterPro" id="IPR004529">
    <property type="entry name" value="Phe-tRNA-synth_IIc_asu"/>
</dbReference>
<dbReference type="InterPro" id="IPR004188">
    <property type="entry name" value="Phe-tRNA_ligase_II_N"/>
</dbReference>
<dbReference type="InterPro" id="IPR022911">
    <property type="entry name" value="Phe_tRNA_ligase_alpha1_bac"/>
</dbReference>
<dbReference type="InterPro" id="IPR002319">
    <property type="entry name" value="Phenylalanyl-tRNA_Synthase"/>
</dbReference>
<dbReference type="InterPro" id="IPR010978">
    <property type="entry name" value="tRNA-bd_arm"/>
</dbReference>
<dbReference type="NCBIfam" id="TIGR00468">
    <property type="entry name" value="pheS"/>
    <property type="match status" value="1"/>
</dbReference>
<dbReference type="PANTHER" id="PTHR11538:SF41">
    <property type="entry name" value="PHENYLALANINE--TRNA LIGASE, MITOCHONDRIAL"/>
    <property type="match status" value="1"/>
</dbReference>
<dbReference type="PANTHER" id="PTHR11538">
    <property type="entry name" value="PHENYLALANYL-TRNA SYNTHETASE"/>
    <property type="match status" value="1"/>
</dbReference>
<dbReference type="Pfam" id="PF02912">
    <property type="entry name" value="Phe_tRNA-synt_N"/>
    <property type="match status" value="1"/>
</dbReference>
<dbReference type="Pfam" id="PF01409">
    <property type="entry name" value="tRNA-synt_2d"/>
    <property type="match status" value="1"/>
</dbReference>
<dbReference type="SUPFAM" id="SSF55681">
    <property type="entry name" value="Class II aaRS and biotin synthetases"/>
    <property type="match status" value="1"/>
</dbReference>
<dbReference type="SUPFAM" id="SSF46589">
    <property type="entry name" value="tRNA-binding arm"/>
    <property type="match status" value="1"/>
</dbReference>
<dbReference type="PROSITE" id="PS50862">
    <property type="entry name" value="AA_TRNA_LIGASE_II"/>
    <property type="match status" value="1"/>
</dbReference>
<evidence type="ECO:0000255" key="1">
    <source>
        <dbReference type="HAMAP-Rule" id="MF_00281"/>
    </source>
</evidence>
<feature type="chain" id="PRO_0000126762" description="Phenylalanine--tRNA ligase alpha subunit">
    <location>
        <begin position="1"/>
        <end position="352"/>
    </location>
</feature>
<feature type="binding site" evidence="1">
    <location>
        <position position="258"/>
    </location>
    <ligand>
        <name>Mg(2+)</name>
        <dbReference type="ChEBI" id="CHEBI:18420"/>
        <note>shared with beta subunit</note>
    </ligand>
</feature>
<name>SYFA_STAAR</name>
<protein>
    <recommendedName>
        <fullName evidence="1">Phenylalanine--tRNA ligase alpha subunit</fullName>
        <ecNumber evidence="1">6.1.1.20</ecNumber>
    </recommendedName>
    <alternativeName>
        <fullName evidence="1">Phenylalanyl-tRNA synthetase alpha subunit</fullName>
        <shortName evidence="1">PheRS</shortName>
    </alternativeName>
</protein>
<accession>Q6GHU7</accession>
<sequence>MSEQQTMSELKQQALVDINEANDERALQEVKVKYLGKKGSVSGLMKLMKDLPNEEKPAFGQKVNELRQTIQNELDERQQMLVKEKLNKQLAEETIDVSLPGRHIEIGSKHPLTRTIEEIEDLFLGLGYEIVNGYEVEQDHYNFEMLNLPKSHPARDMQDSFYITDEILLRTHTSPVQARTMESRHGQGPVKIICPGKVYRRDSDDATHSHQFTQIEGLVVDKNVKMSDLKGTLELLAKKLFGADREIRLRPSYFPFTEPSVEVDVSCFKCKGKGCNVCKHTGWIEILGAGMVHPNVLEMAGFDSSEYSGFAFGMGPDRIAMLKYGIEDIRHFYTNDVRFLDQFKAVEDRGDM</sequence>
<comment type="catalytic activity">
    <reaction evidence="1">
        <text>tRNA(Phe) + L-phenylalanine + ATP = L-phenylalanyl-tRNA(Phe) + AMP + diphosphate + H(+)</text>
        <dbReference type="Rhea" id="RHEA:19413"/>
        <dbReference type="Rhea" id="RHEA-COMP:9668"/>
        <dbReference type="Rhea" id="RHEA-COMP:9699"/>
        <dbReference type="ChEBI" id="CHEBI:15378"/>
        <dbReference type="ChEBI" id="CHEBI:30616"/>
        <dbReference type="ChEBI" id="CHEBI:33019"/>
        <dbReference type="ChEBI" id="CHEBI:58095"/>
        <dbReference type="ChEBI" id="CHEBI:78442"/>
        <dbReference type="ChEBI" id="CHEBI:78531"/>
        <dbReference type="ChEBI" id="CHEBI:456215"/>
        <dbReference type="EC" id="6.1.1.20"/>
    </reaction>
</comment>
<comment type="cofactor">
    <cofactor evidence="1">
        <name>Mg(2+)</name>
        <dbReference type="ChEBI" id="CHEBI:18420"/>
    </cofactor>
    <text evidence="1">Binds 2 magnesium ions per tetramer.</text>
</comment>
<comment type="subunit">
    <text evidence="1">Tetramer of two alpha and two beta subunits.</text>
</comment>
<comment type="subcellular location">
    <subcellularLocation>
        <location evidence="1">Cytoplasm</location>
    </subcellularLocation>
</comment>
<comment type="similarity">
    <text evidence="1">Belongs to the class-II aminoacyl-tRNA synthetase family. Phe-tRNA synthetase alpha subunit type 1 subfamily.</text>
</comment>
<reference key="1">
    <citation type="journal article" date="2004" name="Proc. Natl. Acad. Sci. U.S.A.">
        <title>Complete genomes of two clinical Staphylococcus aureus strains: evidence for the rapid evolution of virulence and drug resistance.</title>
        <authorList>
            <person name="Holden M.T.G."/>
            <person name="Feil E.J."/>
            <person name="Lindsay J.A."/>
            <person name="Peacock S.J."/>
            <person name="Day N.P.J."/>
            <person name="Enright M.C."/>
            <person name="Foster T.J."/>
            <person name="Moore C.E."/>
            <person name="Hurst L."/>
            <person name="Atkin R."/>
            <person name="Barron A."/>
            <person name="Bason N."/>
            <person name="Bentley S.D."/>
            <person name="Chillingworth C."/>
            <person name="Chillingworth T."/>
            <person name="Churcher C."/>
            <person name="Clark L."/>
            <person name="Corton C."/>
            <person name="Cronin A."/>
            <person name="Doggett J."/>
            <person name="Dowd L."/>
            <person name="Feltwell T."/>
            <person name="Hance Z."/>
            <person name="Harris B."/>
            <person name="Hauser H."/>
            <person name="Holroyd S."/>
            <person name="Jagels K."/>
            <person name="James K.D."/>
            <person name="Lennard N."/>
            <person name="Line A."/>
            <person name="Mayes R."/>
            <person name="Moule S."/>
            <person name="Mungall K."/>
            <person name="Ormond D."/>
            <person name="Quail M.A."/>
            <person name="Rabbinowitsch E."/>
            <person name="Rutherford K.M."/>
            <person name="Sanders M."/>
            <person name="Sharp S."/>
            <person name="Simmonds M."/>
            <person name="Stevens K."/>
            <person name="Whitehead S."/>
            <person name="Barrell B.G."/>
            <person name="Spratt B.G."/>
            <person name="Parkhill J."/>
        </authorList>
    </citation>
    <scope>NUCLEOTIDE SEQUENCE [LARGE SCALE GENOMIC DNA]</scope>
    <source>
        <strain>MRSA252</strain>
    </source>
</reference>